<accession>A8FYI7</accession>
<name>RDGC_SHESH</name>
<sequence>MWFKNLTVYRFNKPFSVDTEALEKSLEDFTFSPCSSQDISKFGFSNALGKQGQTLVHSASERHLICATKEEKILPSQVIKEALEDKVAQIEAEEDRKLAKKEKDAMKEEIVMTLLPRAFTRRSQIRALIIPEIEMILVDSSSAAKSEELLALLRKALGSLPIIPLSFKTPIETQLTEWLKGNSTPAPFIMQDEAELKTDSDEGGIVRFKQQDLTEDEVLAHIEVGKQVHKLALYFGQSIAFLLQSDAGIKRLKFSEEFRAGNDEVGTEDPMARLDADFALMGSELIALMNSLVEVLGGVEDSI</sequence>
<reference key="1">
    <citation type="submission" date="2007-08" db="EMBL/GenBank/DDBJ databases">
        <title>Complete sequence of Shewanella sediminis HAW-EB3.</title>
        <authorList>
            <consortium name="US DOE Joint Genome Institute"/>
            <person name="Copeland A."/>
            <person name="Lucas S."/>
            <person name="Lapidus A."/>
            <person name="Barry K."/>
            <person name="Glavina del Rio T."/>
            <person name="Dalin E."/>
            <person name="Tice H."/>
            <person name="Pitluck S."/>
            <person name="Chertkov O."/>
            <person name="Brettin T."/>
            <person name="Bruce D."/>
            <person name="Detter J.C."/>
            <person name="Han C."/>
            <person name="Schmutz J."/>
            <person name="Larimer F."/>
            <person name="Land M."/>
            <person name="Hauser L."/>
            <person name="Kyrpides N."/>
            <person name="Kim E."/>
            <person name="Zhao J.-S."/>
            <person name="Richardson P."/>
        </authorList>
    </citation>
    <scope>NUCLEOTIDE SEQUENCE [LARGE SCALE GENOMIC DNA]</scope>
    <source>
        <strain>HAW-EB3</strain>
    </source>
</reference>
<dbReference type="EMBL" id="CP000821">
    <property type="protein sequence ID" value="ABV37910.1"/>
    <property type="molecule type" value="Genomic_DNA"/>
</dbReference>
<dbReference type="RefSeq" id="WP_012143640.1">
    <property type="nucleotide sequence ID" value="NC_009831.1"/>
</dbReference>
<dbReference type="SMR" id="A8FYI7"/>
<dbReference type="STRING" id="425104.Ssed_3306"/>
<dbReference type="KEGG" id="sse:Ssed_3306"/>
<dbReference type="eggNOG" id="COG2974">
    <property type="taxonomic scope" value="Bacteria"/>
</dbReference>
<dbReference type="HOGENOM" id="CLU_052038_1_1_6"/>
<dbReference type="OrthoDB" id="5290530at2"/>
<dbReference type="Proteomes" id="UP000002015">
    <property type="component" value="Chromosome"/>
</dbReference>
<dbReference type="GO" id="GO:0043590">
    <property type="term" value="C:bacterial nucleoid"/>
    <property type="evidence" value="ECO:0007669"/>
    <property type="project" value="TreeGrafter"/>
</dbReference>
<dbReference type="GO" id="GO:0005737">
    <property type="term" value="C:cytoplasm"/>
    <property type="evidence" value="ECO:0007669"/>
    <property type="project" value="UniProtKB-UniRule"/>
</dbReference>
<dbReference type="GO" id="GO:0003690">
    <property type="term" value="F:double-stranded DNA binding"/>
    <property type="evidence" value="ECO:0007669"/>
    <property type="project" value="TreeGrafter"/>
</dbReference>
<dbReference type="GO" id="GO:0006310">
    <property type="term" value="P:DNA recombination"/>
    <property type="evidence" value="ECO:0007669"/>
    <property type="project" value="UniProtKB-UniRule"/>
</dbReference>
<dbReference type="GO" id="GO:0000018">
    <property type="term" value="P:regulation of DNA recombination"/>
    <property type="evidence" value="ECO:0007669"/>
    <property type="project" value="TreeGrafter"/>
</dbReference>
<dbReference type="HAMAP" id="MF_00194">
    <property type="entry name" value="RdgC"/>
    <property type="match status" value="1"/>
</dbReference>
<dbReference type="InterPro" id="IPR007476">
    <property type="entry name" value="RdgC"/>
</dbReference>
<dbReference type="NCBIfam" id="NF001462">
    <property type="entry name" value="PRK00321.1-3"/>
    <property type="match status" value="1"/>
</dbReference>
<dbReference type="NCBIfam" id="NF001464">
    <property type="entry name" value="PRK00321.1-5"/>
    <property type="match status" value="1"/>
</dbReference>
<dbReference type="PANTHER" id="PTHR38103">
    <property type="entry name" value="RECOMBINATION-ASSOCIATED PROTEIN RDGC"/>
    <property type="match status" value="1"/>
</dbReference>
<dbReference type="PANTHER" id="PTHR38103:SF1">
    <property type="entry name" value="RECOMBINATION-ASSOCIATED PROTEIN RDGC"/>
    <property type="match status" value="1"/>
</dbReference>
<dbReference type="Pfam" id="PF04381">
    <property type="entry name" value="RdgC"/>
    <property type="match status" value="1"/>
</dbReference>
<organism>
    <name type="scientific">Shewanella sediminis (strain HAW-EB3)</name>
    <dbReference type="NCBI Taxonomy" id="425104"/>
    <lineage>
        <taxon>Bacteria</taxon>
        <taxon>Pseudomonadati</taxon>
        <taxon>Pseudomonadota</taxon>
        <taxon>Gammaproteobacteria</taxon>
        <taxon>Alteromonadales</taxon>
        <taxon>Shewanellaceae</taxon>
        <taxon>Shewanella</taxon>
    </lineage>
</organism>
<evidence type="ECO:0000255" key="1">
    <source>
        <dbReference type="HAMAP-Rule" id="MF_00194"/>
    </source>
</evidence>
<proteinExistence type="inferred from homology"/>
<keyword id="KW-0963">Cytoplasm</keyword>
<keyword id="KW-0233">DNA recombination</keyword>
<keyword id="KW-1185">Reference proteome</keyword>
<feature type="chain" id="PRO_1000077645" description="Recombination-associated protein RdgC">
    <location>
        <begin position="1"/>
        <end position="303"/>
    </location>
</feature>
<comment type="function">
    <text evidence="1">May be involved in recombination.</text>
</comment>
<comment type="subcellular location">
    <subcellularLocation>
        <location evidence="1">Cytoplasm</location>
        <location evidence="1">Nucleoid</location>
    </subcellularLocation>
</comment>
<comment type="similarity">
    <text evidence="1">Belongs to the RdgC family.</text>
</comment>
<gene>
    <name evidence="1" type="primary">rdgC</name>
    <name type="ordered locus">Ssed_3306</name>
</gene>
<protein>
    <recommendedName>
        <fullName evidence="1">Recombination-associated protein RdgC</fullName>
    </recommendedName>
</protein>